<sequence>MKTKEVVDELTVKRAITRITYEIIERNKDLNKIVLAGIKTRGVFIAHRIQERLKQLENLSVPVVELDTKPFRDDVKSGEDTSLVSVDVTDREVILVDDVLYTGRTIRAAIDNIVGHGRPARVSLAVLVDRGHRELPIRPDYVGKNIPTSRSEEIIVEMTELDDQDRVLITEEA</sequence>
<feature type="chain" id="PRO_1000164855" description="Bifunctional protein PyrR">
    <location>
        <begin position="1"/>
        <end position="173"/>
    </location>
</feature>
<feature type="short sequence motif" description="PRPP-binding" evidence="1">
    <location>
        <begin position="93"/>
        <end position="105"/>
    </location>
</feature>
<proteinExistence type="inferred from homology"/>
<organism>
    <name type="scientific">Streptococcus pneumoniae (strain ATCC 700669 / Spain 23F-1)</name>
    <dbReference type="NCBI Taxonomy" id="561276"/>
    <lineage>
        <taxon>Bacteria</taxon>
        <taxon>Bacillati</taxon>
        <taxon>Bacillota</taxon>
        <taxon>Bacilli</taxon>
        <taxon>Lactobacillales</taxon>
        <taxon>Streptococcaceae</taxon>
        <taxon>Streptococcus</taxon>
    </lineage>
</organism>
<comment type="function">
    <text evidence="1">Regulates transcriptional attenuation of the pyrimidine nucleotide (pyr) operon by binding in a uridine-dependent manner to specific sites on pyr mRNA. This disrupts an antiterminator hairpin in the RNA and favors formation of a downstream transcription terminator, leading to a reduced expression of downstream genes.</text>
</comment>
<comment type="function">
    <text evidence="1">Also displays a weak uracil phosphoribosyltransferase activity which is not physiologically significant.</text>
</comment>
<comment type="catalytic activity">
    <reaction evidence="1">
        <text>UMP + diphosphate = 5-phospho-alpha-D-ribose 1-diphosphate + uracil</text>
        <dbReference type="Rhea" id="RHEA:13017"/>
        <dbReference type="ChEBI" id="CHEBI:17568"/>
        <dbReference type="ChEBI" id="CHEBI:33019"/>
        <dbReference type="ChEBI" id="CHEBI:57865"/>
        <dbReference type="ChEBI" id="CHEBI:58017"/>
        <dbReference type="EC" id="2.4.2.9"/>
    </reaction>
</comment>
<comment type="subunit">
    <text evidence="1">Homodimer and homohexamer; in equilibrium.</text>
</comment>
<comment type="similarity">
    <text evidence="1">Belongs to the purine/pyrimidine phosphoribosyltransferase family. PyrR subfamily.</text>
</comment>
<name>PYRR_STRPJ</name>
<keyword id="KW-0328">Glycosyltransferase</keyword>
<keyword id="KW-0694">RNA-binding</keyword>
<keyword id="KW-0804">Transcription</keyword>
<keyword id="KW-0805">Transcription regulation</keyword>
<keyword id="KW-0806">Transcription termination</keyword>
<keyword id="KW-0808">Transferase</keyword>
<dbReference type="EC" id="2.4.2.9" evidence="1"/>
<dbReference type="EMBL" id="FM211187">
    <property type="protein sequence ID" value="CAR68978.1"/>
    <property type="molecule type" value="Genomic_DNA"/>
</dbReference>
<dbReference type="RefSeq" id="WP_000850024.1">
    <property type="nucleotide sequence ID" value="NC_011900.1"/>
</dbReference>
<dbReference type="SMR" id="B8ZJU2"/>
<dbReference type="GeneID" id="45653435"/>
<dbReference type="KEGG" id="sne:SPN23F11720"/>
<dbReference type="HOGENOM" id="CLU_094234_2_1_9"/>
<dbReference type="GO" id="GO:0003723">
    <property type="term" value="F:RNA binding"/>
    <property type="evidence" value="ECO:0007669"/>
    <property type="project" value="UniProtKB-UniRule"/>
</dbReference>
<dbReference type="GO" id="GO:0004845">
    <property type="term" value="F:uracil phosphoribosyltransferase activity"/>
    <property type="evidence" value="ECO:0007669"/>
    <property type="project" value="UniProtKB-UniRule"/>
</dbReference>
<dbReference type="GO" id="GO:0006353">
    <property type="term" value="P:DNA-templated transcription termination"/>
    <property type="evidence" value="ECO:0007669"/>
    <property type="project" value="UniProtKB-UniRule"/>
</dbReference>
<dbReference type="CDD" id="cd06223">
    <property type="entry name" value="PRTases_typeI"/>
    <property type="match status" value="1"/>
</dbReference>
<dbReference type="FunFam" id="3.40.50.2020:FF:000020">
    <property type="entry name" value="Bifunctional protein PyrR"/>
    <property type="match status" value="1"/>
</dbReference>
<dbReference type="Gene3D" id="3.40.50.2020">
    <property type="match status" value="1"/>
</dbReference>
<dbReference type="HAMAP" id="MF_01219">
    <property type="entry name" value="PyrR"/>
    <property type="match status" value="1"/>
</dbReference>
<dbReference type="InterPro" id="IPR000836">
    <property type="entry name" value="PRibTrfase_dom"/>
</dbReference>
<dbReference type="InterPro" id="IPR029057">
    <property type="entry name" value="PRTase-like"/>
</dbReference>
<dbReference type="InterPro" id="IPR023050">
    <property type="entry name" value="PyrR"/>
</dbReference>
<dbReference type="InterPro" id="IPR050137">
    <property type="entry name" value="PyrR_bifunctional"/>
</dbReference>
<dbReference type="NCBIfam" id="NF003548">
    <property type="entry name" value="PRK05205.1-4"/>
    <property type="match status" value="1"/>
</dbReference>
<dbReference type="NCBIfam" id="NF003549">
    <property type="entry name" value="PRK05205.1-5"/>
    <property type="match status" value="1"/>
</dbReference>
<dbReference type="PANTHER" id="PTHR11608">
    <property type="entry name" value="BIFUNCTIONAL PROTEIN PYRR"/>
    <property type="match status" value="1"/>
</dbReference>
<dbReference type="PANTHER" id="PTHR11608:SF0">
    <property type="entry name" value="BIFUNCTIONAL PROTEIN PYRR"/>
    <property type="match status" value="1"/>
</dbReference>
<dbReference type="Pfam" id="PF00156">
    <property type="entry name" value="Pribosyltran"/>
    <property type="match status" value="1"/>
</dbReference>
<dbReference type="SUPFAM" id="SSF53271">
    <property type="entry name" value="PRTase-like"/>
    <property type="match status" value="1"/>
</dbReference>
<protein>
    <recommendedName>
        <fullName evidence="1">Bifunctional protein PyrR</fullName>
    </recommendedName>
    <domain>
        <recommendedName>
            <fullName evidence="1">Pyrimidine operon regulatory protein</fullName>
        </recommendedName>
    </domain>
    <domain>
        <recommendedName>
            <fullName evidence="1">Uracil phosphoribosyltransferase</fullName>
            <shortName evidence="1">UPRTase</shortName>
            <ecNumber evidence="1">2.4.2.9</ecNumber>
        </recommendedName>
    </domain>
</protein>
<gene>
    <name evidence="1" type="primary">pyrR</name>
    <name type="ordered locus">SPN23F11720</name>
</gene>
<accession>B8ZJU2</accession>
<evidence type="ECO:0000255" key="1">
    <source>
        <dbReference type="HAMAP-Rule" id="MF_01219"/>
    </source>
</evidence>
<reference key="1">
    <citation type="journal article" date="2009" name="J. Bacteriol.">
        <title>Role of conjugative elements in the evolution of the multidrug-resistant pandemic clone Streptococcus pneumoniae Spain23F ST81.</title>
        <authorList>
            <person name="Croucher N.J."/>
            <person name="Walker D."/>
            <person name="Romero P."/>
            <person name="Lennard N."/>
            <person name="Paterson G.K."/>
            <person name="Bason N.C."/>
            <person name="Mitchell A.M."/>
            <person name="Quail M.A."/>
            <person name="Andrew P.W."/>
            <person name="Parkhill J."/>
            <person name="Bentley S.D."/>
            <person name="Mitchell T.J."/>
        </authorList>
    </citation>
    <scope>NUCLEOTIDE SEQUENCE [LARGE SCALE GENOMIC DNA]</scope>
    <source>
        <strain>ATCC 700669 / Spain 23F-1</strain>
    </source>
</reference>